<gene>
    <name evidence="1" type="primary">rpmD</name>
    <name type="ordered locus">FRAAL1099</name>
</gene>
<name>RL30_FRAAA</name>
<evidence type="ECO:0000255" key="1">
    <source>
        <dbReference type="HAMAP-Rule" id="MF_01371"/>
    </source>
</evidence>
<evidence type="ECO:0000305" key="2"/>
<accession>Q0RRQ3</accession>
<sequence length="61" mass="6895">MAKLRITQIRSGIGGTHNQRATLRTLGLRKINATTVRDDRPEVRGMIRTVTHLVRVEEVDS</sequence>
<keyword id="KW-1185">Reference proteome</keyword>
<keyword id="KW-0687">Ribonucleoprotein</keyword>
<keyword id="KW-0689">Ribosomal protein</keyword>
<comment type="subunit">
    <text evidence="1">Part of the 50S ribosomal subunit.</text>
</comment>
<comment type="similarity">
    <text evidence="1">Belongs to the universal ribosomal protein uL30 family.</text>
</comment>
<organism>
    <name type="scientific">Frankia alni (strain DSM 45986 / CECT 9034 / ACN14a)</name>
    <dbReference type="NCBI Taxonomy" id="326424"/>
    <lineage>
        <taxon>Bacteria</taxon>
        <taxon>Bacillati</taxon>
        <taxon>Actinomycetota</taxon>
        <taxon>Actinomycetes</taxon>
        <taxon>Frankiales</taxon>
        <taxon>Frankiaceae</taxon>
        <taxon>Frankia</taxon>
    </lineage>
</organism>
<protein>
    <recommendedName>
        <fullName evidence="1">Large ribosomal subunit protein uL30</fullName>
    </recommendedName>
    <alternativeName>
        <fullName evidence="2">50S ribosomal protein L30</fullName>
    </alternativeName>
</protein>
<proteinExistence type="inferred from homology"/>
<reference key="1">
    <citation type="journal article" date="2007" name="Genome Res.">
        <title>Genome characteristics of facultatively symbiotic Frankia sp. strains reflect host range and host plant biogeography.</title>
        <authorList>
            <person name="Normand P."/>
            <person name="Lapierre P."/>
            <person name="Tisa L.S."/>
            <person name="Gogarten J.P."/>
            <person name="Alloisio N."/>
            <person name="Bagnarol E."/>
            <person name="Bassi C.A."/>
            <person name="Berry A.M."/>
            <person name="Bickhart D.M."/>
            <person name="Choisne N."/>
            <person name="Couloux A."/>
            <person name="Cournoyer B."/>
            <person name="Cruveiller S."/>
            <person name="Daubin V."/>
            <person name="Demange N."/>
            <person name="Francino M.P."/>
            <person name="Goltsman E."/>
            <person name="Huang Y."/>
            <person name="Kopp O.R."/>
            <person name="Labarre L."/>
            <person name="Lapidus A."/>
            <person name="Lavire C."/>
            <person name="Marechal J."/>
            <person name="Martinez M."/>
            <person name="Mastronunzio J.E."/>
            <person name="Mullin B.C."/>
            <person name="Niemann J."/>
            <person name="Pujic P."/>
            <person name="Rawnsley T."/>
            <person name="Rouy Z."/>
            <person name="Schenowitz C."/>
            <person name="Sellstedt A."/>
            <person name="Tavares F."/>
            <person name="Tomkins J.P."/>
            <person name="Vallenet D."/>
            <person name="Valverde C."/>
            <person name="Wall L.G."/>
            <person name="Wang Y."/>
            <person name="Medigue C."/>
            <person name="Benson D.R."/>
        </authorList>
    </citation>
    <scope>NUCLEOTIDE SEQUENCE [LARGE SCALE GENOMIC DNA]</scope>
    <source>
        <strain>DSM 45986 / CECT 9034 / ACN14a</strain>
    </source>
</reference>
<feature type="chain" id="PRO_0000273790" description="Large ribosomal subunit protein uL30">
    <location>
        <begin position="1"/>
        <end position="61"/>
    </location>
</feature>
<dbReference type="EMBL" id="CT573213">
    <property type="protein sequence ID" value="CAJ59764.1"/>
    <property type="molecule type" value="Genomic_DNA"/>
</dbReference>
<dbReference type="RefSeq" id="WP_011602312.1">
    <property type="nucleotide sequence ID" value="NC_008278.1"/>
</dbReference>
<dbReference type="SMR" id="Q0RRQ3"/>
<dbReference type="STRING" id="326424.FRAAL1099"/>
<dbReference type="KEGG" id="fal:FRAAL1099"/>
<dbReference type="eggNOG" id="COG1841">
    <property type="taxonomic scope" value="Bacteria"/>
</dbReference>
<dbReference type="HOGENOM" id="CLU_131047_2_1_11"/>
<dbReference type="OrthoDB" id="9812790at2"/>
<dbReference type="Proteomes" id="UP000000657">
    <property type="component" value="Chromosome"/>
</dbReference>
<dbReference type="GO" id="GO:0022625">
    <property type="term" value="C:cytosolic large ribosomal subunit"/>
    <property type="evidence" value="ECO:0007669"/>
    <property type="project" value="TreeGrafter"/>
</dbReference>
<dbReference type="GO" id="GO:0003735">
    <property type="term" value="F:structural constituent of ribosome"/>
    <property type="evidence" value="ECO:0007669"/>
    <property type="project" value="InterPro"/>
</dbReference>
<dbReference type="GO" id="GO:0006412">
    <property type="term" value="P:translation"/>
    <property type="evidence" value="ECO:0007669"/>
    <property type="project" value="UniProtKB-UniRule"/>
</dbReference>
<dbReference type="CDD" id="cd01658">
    <property type="entry name" value="Ribosomal_L30"/>
    <property type="match status" value="1"/>
</dbReference>
<dbReference type="FunFam" id="3.30.1390.20:FF:000001">
    <property type="entry name" value="50S ribosomal protein L30"/>
    <property type="match status" value="1"/>
</dbReference>
<dbReference type="Gene3D" id="3.30.1390.20">
    <property type="entry name" value="Ribosomal protein L30, ferredoxin-like fold domain"/>
    <property type="match status" value="1"/>
</dbReference>
<dbReference type="HAMAP" id="MF_01371_B">
    <property type="entry name" value="Ribosomal_uL30_B"/>
    <property type="match status" value="1"/>
</dbReference>
<dbReference type="InterPro" id="IPR036919">
    <property type="entry name" value="Ribo_uL30_ferredoxin-like_sf"/>
</dbReference>
<dbReference type="InterPro" id="IPR005996">
    <property type="entry name" value="Ribosomal_uL30_bac-type"/>
</dbReference>
<dbReference type="InterPro" id="IPR016082">
    <property type="entry name" value="Ribosomal_uL30_ferredoxin-like"/>
</dbReference>
<dbReference type="NCBIfam" id="TIGR01308">
    <property type="entry name" value="rpmD_bact"/>
    <property type="match status" value="1"/>
</dbReference>
<dbReference type="PANTHER" id="PTHR15892:SF2">
    <property type="entry name" value="LARGE RIBOSOMAL SUBUNIT PROTEIN UL30M"/>
    <property type="match status" value="1"/>
</dbReference>
<dbReference type="PANTHER" id="PTHR15892">
    <property type="entry name" value="MITOCHONDRIAL RIBOSOMAL PROTEIN L30"/>
    <property type="match status" value="1"/>
</dbReference>
<dbReference type="Pfam" id="PF00327">
    <property type="entry name" value="Ribosomal_L30"/>
    <property type="match status" value="1"/>
</dbReference>
<dbReference type="PIRSF" id="PIRSF002211">
    <property type="entry name" value="Ribosomal_L30_bac-type"/>
    <property type="match status" value="1"/>
</dbReference>
<dbReference type="SUPFAM" id="SSF55129">
    <property type="entry name" value="Ribosomal protein L30p/L7e"/>
    <property type="match status" value="1"/>
</dbReference>